<geneLocation type="chloroplast"/>
<feature type="chain" id="PRO_0000300144" description="Cytochrome b6-f complex subunit 6">
    <location>
        <begin position="1"/>
        <end position="31"/>
    </location>
</feature>
<feature type="transmembrane region" description="Helical" evidence="1">
    <location>
        <begin position="3"/>
        <end position="23"/>
    </location>
</feature>
<proteinExistence type="inferred from homology"/>
<protein>
    <recommendedName>
        <fullName evidence="1">Cytochrome b6-f complex subunit 6</fullName>
    </recommendedName>
    <alternativeName>
        <fullName evidence="1">Cytochrome b6-f complex subunit PetL</fullName>
    </alternativeName>
    <alternativeName>
        <fullName evidence="1">Cytochrome b6-f complex subunit VI</fullName>
    </alternativeName>
</protein>
<sequence length="31" mass="3745">MAILISYFCFLLIFFLFTLILFFGLNKIRLI</sequence>
<accession>A6BM21</accession>
<accession>B7ZI96</accession>
<gene>
    <name evidence="1" type="primary">petL</name>
</gene>
<evidence type="ECO:0000255" key="1">
    <source>
        <dbReference type="HAMAP-Rule" id="MF_00433"/>
    </source>
</evidence>
<comment type="function">
    <text evidence="1">Component of the cytochrome b6-f complex, which mediates electron transfer between photosystem II (PSII) and photosystem I (PSI), cyclic electron flow around PSI, and state transitions. PetL is important for photoautotrophic growth as well as for electron transfer efficiency and stability of the cytochrome b6-f complex.</text>
</comment>
<comment type="subunit">
    <text evidence="1">The 4 large subunits of the cytochrome b6-f complex are cytochrome b6, subunit IV (17 kDa polypeptide, PetD), cytochrome f and the Rieske protein, while the 4 small subunits are PetG, PetL, PetM and PetN. The complex functions as a dimer.</text>
</comment>
<comment type="subcellular location">
    <subcellularLocation>
        <location evidence="1">Plastid</location>
        <location evidence="1">Chloroplast thylakoid membrane</location>
        <topology evidence="1">Single-pass membrane protein</topology>
    </subcellularLocation>
</comment>
<comment type="similarity">
    <text evidence="1">Belongs to the PetL family.</text>
</comment>
<keyword id="KW-0150">Chloroplast</keyword>
<keyword id="KW-0249">Electron transport</keyword>
<keyword id="KW-0472">Membrane</keyword>
<keyword id="KW-0602">Photosynthesis</keyword>
<keyword id="KW-0934">Plastid</keyword>
<keyword id="KW-0793">Thylakoid</keyword>
<keyword id="KW-0812">Transmembrane</keyword>
<keyword id="KW-1133">Transmembrane helix</keyword>
<keyword id="KW-0813">Transport</keyword>
<dbReference type="EMBL" id="AB295917">
    <property type="protein sequence ID" value="BAF64866.1"/>
    <property type="molecule type" value="Genomic_DNA"/>
</dbReference>
<dbReference type="EMBL" id="AP009569">
    <property type="protein sequence ID" value="BAH11276.1"/>
    <property type="molecule type" value="Genomic_DNA"/>
</dbReference>
<dbReference type="RefSeq" id="YP_002519765.1">
    <property type="nucleotide sequence ID" value="NC_011942.1"/>
</dbReference>
<dbReference type="SMR" id="A6BM21"/>
<dbReference type="GeneID" id="7368128"/>
<dbReference type="GO" id="GO:0009535">
    <property type="term" value="C:chloroplast thylakoid membrane"/>
    <property type="evidence" value="ECO:0007669"/>
    <property type="project" value="UniProtKB-SubCell"/>
</dbReference>
<dbReference type="GO" id="GO:0009512">
    <property type="term" value="C:cytochrome b6f complex"/>
    <property type="evidence" value="ECO:0007669"/>
    <property type="project" value="InterPro"/>
</dbReference>
<dbReference type="GO" id="GO:0045158">
    <property type="term" value="F:electron transporter, transferring electrons within cytochrome b6/f complex of photosystem II activity"/>
    <property type="evidence" value="ECO:0007669"/>
    <property type="project" value="UniProtKB-UniRule"/>
</dbReference>
<dbReference type="GO" id="GO:0015979">
    <property type="term" value="P:photosynthesis"/>
    <property type="evidence" value="ECO:0007669"/>
    <property type="project" value="UniProtKB-KW"/>
</dbReference>
<dbReference type="HAMAP" id="MF_00433">
    <property type="entry name" value="Cytb6_f_PetL"/>
    <property type="match status" value="1"/>
</dbReference>
<dbReference type="InterPro" id="IPR007802">
    <property type="entry name" value="Cyt_b6/f_cplx_su6"/>
</dbReference>
<dbReference type="Pfam" id="PF05115">
    <property type="entry name" value="PetL"/>
    <property type="match status" value="1"/>
</dbReference>
<reference key="1">
    <citation type="journal article" date="2007" name="Mol. Biol. Evol.">
        <title>Chloroplast genome (cpDNA) of Cycas taitungensis and 56 cp protein-coding genes of Gnetum parvifolium: insights into cpDNA evolution and phylogeny of extant seed plants.</title>
        <authorList>
            <person name="Wu C.-S."/>
            <person name="Wang Y.-N."/>
            <person name="Liu S.-M."/>
            <person name="Chaw S.-M."/>
        </authorList>
    </citation>
    <scope>NUCLEOTIDE SEQUENCE [LARGE SCALE GENOMIC DNA]</scope>
</reference>
<reference key="2">
    <citation type="journal article" date="2009" name="Mol. Phylogenet. Evol.">
        <title>Evolution of reduced and compact chloroplast genomes (cpDNAs) in gnetophytes: Selection toward a lower-cost strategy.</title>
        <authorList>
            <person name="Wu C.-S."/>
            <person name="Lai Y.-T."/>
            <person name="Lin C.-P."/>
            <person name="Wang Y.-N."/>
            <person name="Chaw S.-M."/>
        </authorList>
    </citation>
    <scope>NUCLEOTIDE SEQUENCE [LARGE SCALE GENOMIC DNA]</scope>
</reference>
<name>PETL_GNEPA</name>
<organism>
    <name type="scientific">Gnetum parvifolium</name>
    <name type="common">Small-leaved jointfir</name>
    <name type="synonym">Gnetum scandens var. parvifolium</name>
    <dbReference type="NCBI Taxonomy" id="33153"/>
    <lineage>
        <taxon>Eukaryota</taxon>
        <taxon>Viridiplantae</taxon>
        <taxon>Streptophyta</taxon>
        <taxon>Embryophyta</taxon>
        <taxon>Tracheophyta</taxon>
        <taxon>Spermatophyta</taxon>
        <taxon>Gnetopsida</taxon>
        <taxon>Gnetidae</taxon>
        <taxon>Gnetales</taxon>
        <taxon>Gnetaceae</taxon>
        <taxon>Gnetum</taxon>
    </lineage>
</organism>